<dbReference type="EC" id="3.1.26.5" evidence="1"/>
<dbReference type="EMBL" id="AE014075">
    <property type="protein sequence ID" value="AAN83059.1"/>
    <property type="molecule type" value="Genomic_DNA"/>
</dbReference>
<dbReference type="RefSeq" id="WP_000239729.1">
    <property type="nucleotide sequence ID" value="NC_004431.1"/>
</dbReference>
<dbReference type="SMR" id="Q8FBV5"/>
<dbReference type="STRING" id="199310.c4628"/>
<dbReference type="KEGG" id="ecc:c4628"/>
<dbReference type="eggNOG" id="COG0594">
    <property type="taxonomic scope" value="Bacteria"/>
</dbReference>
<dbReference type="HOGENOM" id="CLU_117179_11_0_6"/>
<dbReference type="BioCyc" id="ECOL199310:C4628-MONOMER"/>
<dbReference type="Proteomes" id="UP000001410">
    <property type="component" value="Chromosome"/>
</dbReference>
<dbReference type="GO" id="GO:0030677">
    <property type="term" value="C:ribonuclease P complex"/>
    <property type="evidence" value="ECO:0007669"/>
    <property type="project" value="TreeGrafter"/>
</dbReference>
<dbReference type="GO" id="GO:0042781">
    <property type="term" value="F:3'-tRNA processing endoribonuclease activity"/>
    <property type="evidence" value="ECO:0007669"/>
    <property type="project" value="TreeGrafter"/>
</dbReference>
<dbReference type="GO" id="GO:0004526">
    <property type="term" value="F:ribonuclease P activity"/>
    <property type="evidence" value="ECO:0007669"/>
    <property type="project" value="UniProtKB-UniRule"/>
</dbReference>
<dbReference type="GO" id="GO:0000049">
    <property type="term" value="F:tRNA binding"/>
    <property type="evidence" value="ECO:0007669"/>
    <property type="project" value="UniProtKB-UniRule"/>
</dbReference>
<dbReference type="GO" id="GO:0001682">
    <property type="term" value="P:tRNA 5'-leader removal"/>
    <property type="evidence" value="ECO:0007669"/>
    <property type="project" value="UniProtKB-UniRule"/>
</dbReference>
<dbReference type="FunFam" id="3.30.230.10:FF:000016">
    <property type="entry name" value="Ribonuclease P protein component"/>
    <property type="match status" value="1"/>
</dbReference>
<dbReference type="Gene3D" id="3.30.230.10">
    <property type="match status" value="1"/>
</dbReference>
<dbReference type="HAMAP" id="MF_00227">
    <property type="entry name" value="RNase_P"/>
    <property type="match status" value="1"/>
</dbReference>
<dbReference type="InterPro" id="IPR020568">
    <property type="entry name" value="Ribosomal_Su5_D2-typ_SF"/>
</dbReference>
<dbReference type="InterPro" id="IPR014721">
    <property type="entry name" value="Ribsml_uS5_D2-typ_fold_subgr"/>
</dbReference>
<dbReference type="InterPro" id="IPR000100">
    <property type="entry name" value="RNase_P"/>
</dbReference>
<dbReference type="InterPro" id="IPR020539">
    <property type="entry name" value="RNase_P_CS"/>
</dbReference>
<dbReference type="NCBIfam" id="TIGR00188">
    <property type="entry name" value="rnpA"/>
    <property type="match status" value="1"/>
</dbReference>
<dbReference type="PANTHER" id="PTHR33992">
    <property type="entry name" value="RIBONUCLEASE P PROTEIN COMPONENT"/>
    <property type="match status" value="1"/>
</dbReference>
<dbReference type="PANTHER" id="PTHR33992:SF1">
    <property type="entry name" value="RIBONUCLEASE P PROTEIN COMPONENT"/>
    <property type="match status" value="1"/>
</dbReference>
<dbReference type="Pfam" id="PF00825">
    <property type="entry name" value="Ribonuclease_P"/>
    <property type="match status" value="1"/>
</dbReference>
<dbReference type="SUPFAM" id="SSF54211">
    <property type="entry name" value="Ribosomal protein S5 domain 2-like"/>
    <property type="match status" value="1"/>
</dbReference>
<dbReference type="PROSITE" id="PS00648">
    <property type="entry name" value="RIBONUCLEASE_P"/>
    <property type="match status" value="1"/>
</dbReference>
<sequence length="119" mass="13799">MVKLAFPRELRLLTPSQFTFVFQQPQRAGTPQITILGRLNSLGHPRIGLTVAKKNVRRAHERNRIKRLTRESFRLRQHELPAMDFVVVAKKGVADLDNRALSEALEKLWRRHCRLARGP</sequence>
<gene>
    <name evidence="1" type="primary">rnpA</name>
    <name type="ordered locus">c4628</name>
</gene>
<feature type="chain" id="PRO_0000198460" description="Ribonuclease P protein component">
    <location>
        <begin position="1"/>
        <end position="119"/>
    </location>
</feature>
<proteinExistence type="inferred from homology"/>
<reference key="1">
    <citation type="journal article" date="2002" name="Proc. Natl. Acad. Sci. U.S.A.">
        <title>Extensive mosaic structure revealed by the complete genome sequence of uropathogenic Escherichia coli.</title>
        <authorList>
            <person name="Welch R.A."/>
            <person name="Burland V."/>
            <person name="Plunkett G. III"/>
            <person name="Redford P."/>
            <person name="Roesch P."/>
            <person name="Rasko D."/>
            <person name="Buckles E.L."/>
            <person name="Liou S.-R."/>
            <person name="Boutin A."/>
            <person name="Hackett J."/>
            <person name="Stroud D."/>
            <person name="Mayhew G.F."/>
            <person name="Rose D.J."/>
            <person name="Zhou S."/>
            <person name="Schwartz D.C."/>
            <person name="Perna N.T."/>
            <person name="Mobley H.L.T."/>
            <person name="Donnenberg M.S."/>
            <person name="Blattner F.R."/>
        </authorList>
    </citation>
    <scope>NUCLEOTIDE SEQUENCE [LARGE SCALE GENOMIC DNA]</scope>
    <source>
        <strain>CFT073 / ATCC 700928 / UPEC</strain>
    </source>
</reference>
<name>RNPA_ECOL6</name>
<keyword id="KW-0255">Endonuclease</keyword>
<keyword id="KW-0378">Hydrolase</keyword>
<keyword id="KW-0540">Nuclease</keyword>
<keyword id="KW-1185">Reference proteome</keyword>
<keyword id="KW-0694">RNA-binding</keyword>
<keyword id="KW-0819">tRNA processing</keyword>
<protein>
    <recommendedName>
        <fullName evidence="1">Ribonuclease P protein component</fullName>
        <shortName evidence="1">RNase P protein</shortName>
        <shortName evidence="1">RNaseP protein</shortName>
        <ecNumber evidence="1">3.1.26.5</ecNumber>
    </recommendedName>
    <alternativeName>
        <fullName evidence="1">Protein C5</fullName>
    </alternativeName>
</protein>
<evidence type="ECO:0000255" key="1">
    <source>
        <dbReference type="HAMAP-Rule" id="MF_00227"/>
    </source>
</evidence>
<accession>Q8FBV5</accession>
<organism>
    <name type="scientific">Escherichia coli O6:H1 (strain CFT073 / ATCC 700928 / UPEC)</name>
    <dbReference type="NCBI Taxonomy" id="199310"/>
    <lineage>
        <taxon>Bacteria</taxon>
        <taxon>Pseudomonadati</taxon>
        <taxon>Pseudomonadota</taxon>
        <taxon>Gammaproteobacteria</taxon>
        <taxon>Enterobacterales</taxon>
        <taxon>Enterobacteriaceae</taxon>
        <taxon>Escherichia</taxon>
    </lineage>
</organism>
<comment type="function">
    <text evidence="1">RNaseP catalyzes the removal of the 5'-leader sequence from pre-tRNA to produce the mature 5'-terminus. It can also cleave other RNA substrates such as 4.5S RNA. The protein component plays an auxiliary but essential role in vivo by binding to the 5'-leader sequence and broadening the substrate specificity of the ribozyme.</text>
</comment>
<comment type="catalytic activity">
    <reaction evidence="1">
        <text>Endonucleolytic cleavage of RNA, removing 5'-extranucleotides from tRNA precursor.</text>
        <dbReference type="EC" id="3.1.26.5"/>
    </reaction>
</comment>
<comment type="subunit">
    <text evidence="1">Consists of a catalytic RNA component (M1 or rnpB) and a protein subunit.</text>
</comment>
<comment type="similarity">
    <text evidence="1">Belongs to the RnpA family.</text>
</comment>